<organism>
    <name type="scientific">Varanus acanthurus</name>
    <name type="common">Ridge-tailed monitor</name>
    <dbReference type="NCBI Taxonomy" id="62035"/>
    <lineage>
        <taxon>Eukaryota</taxon>
        <taxon>Metazoa</taxon>
        <taxon>Chordata</taxon>
        <taxon>Craniata</taxon>
        <taxon>Vertebrata</taxon>
        <taxon>Euteleostomi</taxon>
        <taxon>Lepidosauria</taxon>
        <taxon>Squamata</taxon>
        <taxon>Bifurcata</taxon>
        <taxon>Unidentata</taxon>
        <taxon>Episquamata</taxon>
        <taxon>Toxicofera</taxon>
        <taxon>Anguimorpha</taxon>
        <taxon>Paleoanguimorpha</taxon>
        <taxon>Varanoidea</taxon>
        <taxon>Varanidae</taxon>
        <taxon>Varanus</taxon>
    </lineage>
</organism>
<keyword id="KW-0108">Calcium channel impairing toxin</keyword>
<keyword id="KW-1015">Disulfide bond</keyword>
<keyword id="KW-0872">Ion channel impairing toxin</keyword>
<keyword id="KW-0528">Neurotoxin</keyword>
<keyword id="KW-0632">Potassium channel impairing toxin</keyword>
<keyword id="KW-0964">Secreted</keyword>
<keyword id="KW-0732">Signal</keyword>
<keyword id="KW-0800">Toxin</keyword>
<protein>
    <recommendedName>
        <fullName>Cysteine-rich venom protein VAR3</fullName>
        <shortName>CRVP</shortName>
    </recommendedName>
    <alternativeName>
        <fullName>Cysteine-rich secretory protein VAR3</fullName>
        <shortName>CRISP-VAR3</shortName>
    </alternativeName>
</protein>
<feature type="signal peptide" evidence="2">
    <location>
        <begin position="1"/>
        <end position="22"/>
    </location>
</feature>
<feature type="chain" id="PRO_0000380654" description="Cysteine-rich venom protein VAR3">
    <location>
        <begin position="23"/>
        <end position="178" status="greater than"/>
    </location>
</feature>
<feature type="domain" description="SCP">
    <location>
        <begin position="41"/>
        <end position="169"/>
    </location>
</feature>
<feature type="disulfide bond" evidence="1">
    <location>
        <begin position="77"/>
        <end position="156"/>
    </location>
</feature>
<feature type="disulfide bond" evidence="1">
    <location>
        <begin position="95"/>
        <end position="170"/>
    </location>
</feature>
<feature type="disulfide bond" evidence="1">
    <location>
        <begin position="151"/>
        <end position="167"/>
    </location>
</feature>
<feature type="non-terminal residue">
    <location>
        <position position="178"/>
    </location>
</feature>
<reference key="1">
    <citation type="journal article" date="2006" name="Nature">
        <title>Early evolution of the venom system in lizards and snakes.</title>
        <authorList>
            <person name="Fry B.G."/>
            <person name="Vidal N."/>
            <person name="Norman J.A."/>
            <person name="Vonk F.J."/>
            <person name="Scheib H."/>
            <person name="Ramjan S.F.R."/>
            <person name="Kuruppu S."/>
            <person name="Fung K."/>
            <person name="Blair Hedges S."/>
            <person name="Richardson M.K."/>
            <person name="Hodgson W.C."/>
            <person name="Ignjatovic V."/>
            <person name="Summerhayes R."/>
            <person name="Kochva E."/>
        </authorList>
    </citation>
    <scope>NUCLEOTIDE SEQUENCE [LARGE SCALE MRNA]</scope>
    <source>
        <tissue>Venom gland</tissue>
    </source>
</reference>
<sequence length="178" mass="20130">MILLKLYLTLAAILCQSRGTTSLDLDDLMTTNPEIQNEIINKHNDLRRTVDPPAKNTLKMSWDNTIAESAKRAALRCNQNEHTPVSGRTIGGVVCGENYFMSSNLRTWSFGIQSWFDERNYFKFGFGPTRAGVMVGHYTQVVWYKSYKMGCAINLCPNEPLKYFLVCQYCPGGNVVGR</sequence>
<name>CRVP3_VARAC</name>
<proteinExistence type="evidence at transcript level"/>
<evidence type="ECO:0000250" key="1"/>
<evidence type="ECO:0000255" key="2"/>
<evidence type="ECO:0000305" key="3"/>
<accession>Q2XXR2</accession>
<comment type="function">
    <text evidence="1">Blocks ryanodine receptors, and potassium channels.</text>
</comment>
<comment type="subcellular location">
    <subcellularLocation>
        <location evidence="1">Secreted</location>
    </subcellularLocation>
</comment>
<comment type="tissue specificity">
    <text>Expressed by the venom gland.</text>
</comment>
<comment type="PTM">
    <text evidence="1">Contains 8 disulfide bonds.</text>
</comment>
<comment type="similarity">
    <text evidence="3">Belongs to the CRISP family.</text>
</comment>
<dbReference type="EMBL" id="DQ139883">
    <property type="protein sequence ID" value="AAZ75589.1"/>
    <property type="molecule type" value="mRNA"/>
</dbReference>
<dbReference type="SMR" id="Q2XXR2"/>
<dbReference type="GO" id="GO:0005576">
    <property type="term" value="C:extracellular region"/>
    <property type="evidence" value="ECO:0007669"/>
    <property type="project" value="UniProtKB-SubCell"/>
</dbReference>
<dbReference type="GO" id="GO:0005246">
    <property type="term" value="F:calcium channel regulator activity"/>
    <property type="evidence" value="ECO:0007669"/>
    <property type="project" value="UniProtKB-KW"/>
</dbReference>
<dbReference type="GO" id="GO:0015459">
    <property type="term" value="F:potassium channel regulator activity"/>
    <property type="evidence" value="ECO:0007669"/>
    <property type="project" value="UniProtKB-KW"/>
</dbReference>
<dbReference type="GO" id="GO:0090729">
    <property type="term" value="F:toxin activity"/>
    <property type="evidence" value="ECO:0007669"/>
    <property type="project" value="UniProtKB-KW"/>
</dbReference>
<dbReference type="CDD" id="cd05383">
    <property type="entry name" value="CAP_CRISP"/>
    <property type="match status" value="1"/>
</dbReference>
<dbReference type="FunFam" id="3.40.33.10:FF:000005">
    <property type="entry name" value="Cysteine-rich secretory protein 2"/>
    <property type="match status" value="1"/>
</dbReference>
<dbReference type="Gene3D" id="3.40.33.10">
    <property type="entry name" value="CAP"/>
    <property type="match status" value="1"/>
</dbReference>
<dbReference type="InterPro" id="IPR018244">
    <property type="entry name" value="Allrgn_V5/Tpx1_CS"/>
</dbReference>
<dbReference type="InterPro" id="IPR014044">
    <property type="entry name" value="CAP_dom"/>
</dbReference>
<dbReference type="InterPro" id="IPR035940">
    <property type="entry name" value="CAP_sf"/>
</dbReference>
<dbReference type="InterPro" id="IPR001283">
    <property type="entry name" value="CRISP-related"/>
</dbReference>
<dbReference type="InterPro" id="IPR034117">
    <property type="entry name" value="SCP_CRISP"/>
</dbReference>
<dbReference type="InterPro" id="IPR002413">
    <property type="entry name" value="V5_allergen-like"/>
</dbReference>
<dbReference type="PANTHER" id="PTHR10334">
    <property type="entry name" value="CYSTEINE-RICH SECRETORY PROTEIN-RELATED"/>
    <property type="match status" value="1"/>
</dbReference>
<dbReference type="Pfam" id="PF00188">
    <property type="entry name" value="CAP"/>
    <property type="match status" value="1"/>
</dbReference>
<dbReference type="PRINTS" id="PR00838">
    <property type="entry name" value="V5ALLERGEN"/>
</dbReference>
<dbReference type="PRINTS" id="PR00837">
    <property type="entry name" value="V5TPXLIKE"/>
</dbReference>
<dbReference type="SMART" id="SM00198">
    <property type="entry name" value="SCP"/>
    <property type="match status" value="1"/>
</dbReference>
<dbReference type="SUPFAM" id="SSF55797">
    <property type="entry name" value="PR-1-like"/>
    <property type="match status" value="1"/>
</dbReference>
<dbReference type="PROSITE" id="PS01009">
    <property type="entry name" value="CRISP_1"/>
    <property type="match status" value="1"/>
</dbReference>
<dbReference type="PROSITE" id="PS01010">
    <property type="entry name" value="CRISP_2"/>
    <property type="match status" value="1"/>
</dbReference>